<sequence>MNIEQFQSMLEEKGITLSSRQLEQFEIYFETLVEWNEKMNLTAITEKEEVYLKHFFDSITAAFYYDFSKPFSICDVGAGAGFPSIPLKICFPHLKVTIVDSLQKRINFLNHLAQKLELSDVAFCHDRAETFGKKEGVREAYDIVMARAVARLSVLSELCLPLVKVGGTFIAMKGAAANEEIENGKYALEVLGGDLKEMSTFQLPFEESERNILLIEKKRKTPKKYPRKPGTPNKLPIEK</sequence>
<feature type="chain" id="PRO_1000190213" description="Ribosomal RNA small subunit methyltransferase G">
    <location>
        <begin position="1"/>
        <end position="239"/>
    </location>
</feature>
<feature type="binding site" evidence="1">
    <location>
        <position position="77"/>
    </location>
    <ligand>
        <name>S-adenosyl-L-methionine</name>
        <dbReference type="ChEBI" id="CHEBI:59789"/>
    </ligand>
</feature>
<feature type="binding site" evidence="1">
    <location>
        <position position="82"/>
    </location>
    <ligand>
        <name>S-adenosyl-L-methionine</name>
        <dbReference type="ChEBI" id="CHEBI:59789"/>
    </ligand>
</feature>
<feature type="binding site" evidence="1">
    <location>
        <begin position="128"/>
        <end position="129"/>
    </location>
    <ligand>
        <name>S-adenosyl-L-methionine</name>
        <dbReference type="ChEBI" id="CHEBI:59789"/>
    </ligand>
</feature>
<feature type="binding site" evidence="1">
    <location>
        <position position="147"/>
    </location>
    <ligand>
        <name>S-adenosyl-L-methionine</name>
        <dbReference type="ChEBI" id="CHEBI:59789"/>
    </ligand>
</feature>
<name>RSMG_BACCQ</name>
<proteinExistence type="inferred from homology"/>
<evidence type="ECO:0000255" key="1">
    <source>
        <dbReference type="HAMAP-Rule" id="MF_00074"/>
    </source>
</evidence>
<comment type="function">
    <text evidence="1">Specifically methylates the N7 position of guanine in position 535 of 16S rRNA.</text>
</comment>
<comment type="subcellular location">
    <subcellularLocation>
        <location evidence="1">Cytoplasm</location>
    </subcellularLocation>
</comment>
<comment type="similarity">
    <text evidence="1">Belongs to the methyltransferase superfamily. RNA methyltransferase RsmG family.</text>
</comment>
<keyword id="KW-0963">Cytoplasm</keyword>
<keyword id="KW-0489">Methyltransferase</keyword>
<keyword id="KW-0698">rRNA processing</keyword>
<keyword id="KW-0949">S-adenosyl-L-methionine</keyword>
<keyword id="KW-0808">Transferase</keyword>
<organism>
    <name type="scientific">Bacillus cereus (strain Q1)</name>
    <dbReference type="NCBI Taxonomy" id="361100"/>
    <lineage>
        <taxon>Bacteria</taxon>
        <taxon>Bacillati</taxon>
        <taxon>Bacillota</taxon>
        <taxon>Bacilli</taxon>
        <taxon>Bacillales</taxon>
        <taxon>Bacillaceae</taxon>
        <taxon>Bacillus</taxon>
        <taxon>Bacillus cereus group</taxon>
    </lineage>
</organism>
<accession>B9IT40</accession>
<gene>
    <name evidence="1" type="primary">rsmG</name>
    <name type="ordered locus">BCQ_5332</name>
</gene>
<reference key="1">
    <citation type="journal article" date="2009" name="J. Bacteriol.">
        <title>Complete genome sequence of the extremophilic Bacillus cereus strain Q1 with industrial applications.</title>
        <authorList>
            <person name="Xiong Z."/>
            <person name="Jiang Y."/>
            <person name="Qi D."/>
            <person name="Lu H."/>
            <person name="Yang F."/>
            <person name="Yang J."/>
            <person name="Chen L."/>
            <person name="Sun L."/>
            <person name="Xu X."/>
            <person name="Xue Y."/>
            <person name="Zhu Y."/>
            <person name="Jin Q."/>
        </authorList>
    </citation>
    <scope>NUCLEOTIDE SEQUENCE [LARGE SCALE GENOMIC DNA]</scope>
    <source>
        <strain>Q1</strain>
    </source>
</reference>
<protein>
    <recommendedName>
        <fullName evidence="1">Ribosomal RNA small subunit methyltransferase G</fullName>
        <ecNumber evidence="1">2.1.1.-</ecNumber>
    </recommendedName>
    <alternativeName>
        <fullName evidence="1">16S rRNA 7-methylguanosine methyltransferase</fullName>
        <shortName evidence="1">16S rRNA m7G methyltransferase</shortName>
    </alternativeName>
</protein>
<dbReference type="EC" id="2.1.1.-" evidence="1"/>
<dbReference type="EMBL" id="CP000227">
    <property type="protein sequence ID" value="ACM15728.1"/>
    <property type="molecule type" value="Genomic_DNA"/>
</dbReference>
<dbReference type="SMR" id="B9IT40"/>
<dbReference type="KEGG" id="bcq:BCQ_5332"/>
<dbReference type="HOGENOM" id="CLU_065341_0_2_9"/>
<dbReference type="Proteomes" id="UP000000441">
    <property type="component" value="Chromosome"/>
</dbReference>
<dbReference type="GO" id="GO:0005829">
    <property type="term" value="C:cytosol"/>
    <property type="evidence" value="ECO:0007669"/>
    <property type="project" value="TreeGrafter"/>
</dbReference>
<dbReference type="GO" id="GO:0070043">
    <property type="term" value="F:rRNA (guanine-N7-)-methyltransferase activity"/>
    <property type="evidence" value="ECO:0007669"/>
    <property type="project" value="UniProtKB-UniRule"/>
</dbReference>
<dbReference type="CDD" id="cd02440">
    <property type="entry name" value="AdoMet_MTases"/>
    <property type="match status" value="1"/>
</dbReference>
<dbReference type="FunFam" id="3.40.50.150:FF:000041">
    <property type="entry name" value="Ribosomal RNA small subunit methyltransferase G"/>
    <property type="match status" value="1"/>
</dbReference>
<dbReference type="Gene3D" id="3.40.50.150">
    <property type="entry name" value="Vaccinia Virus protein VP39"/>
    <property type="match status" value="1"/>
</dbReference>
<dbReference type="HAMAP" id="MF_00074">
    <property type="entry name" value="16SrRNA_methyltr_G"/>
    <property type="match status" value="1"/>
</dbReference>
<dbReference type="InterPro" id="IPR003682">
    <property type="entry name" value="rRNA_ssu_MeTfrase_G"/>
</dbReference>
<dbReference type="InterPro" id="IPR029063">
    <property type="entry name" value="SAM-dependent_MTases_sf"/>
</dbReference>
<dbReference type="NCBIfam" id="TIGR00138">
    <property type="entry name" value="rsmG_gidB"/>
    <property type="match status" value="1"/>
</dbReference>
<dbReference type="PANTHER" id="PTHR31760">
    <property type="entry name" value="S-ADENOSYL-L-METHIONINE-DEPENDENT METHYLTRANSFERASES SUPERFAMILY PROTEIN"/>
    <property type="match status" value="1"/>
</dbReference>
<dbReference type="PANTHER" id="PTHR31760:SF0">
    <property type="entry name" value="S-ADENOSYL-L-METHIONINE-DEPENDENT METHYLTRANSFERASES SUPERFAMILY PROTEIN"/>
    <property type="match status" value="1"/>
</dbReference>
<dbReference type="Pfam" id="PF02527">
    <property type="entry name" value="GidB"/>
    <property type="match status" value="1"/>
</dbReference>
<dbReference type="PIRSF" id="PIRSF003078">
    <property type="entry name" value="GidB"/>
    <property type="match status" value="1"/>
</dbReference>
<dbReference type="SUPFAM" id="SSF53335">
    <property type="entry name" value="S-adenosyl-L-methionine-dependent methyltransferases"/>
    <property type="match status" value="1"/>
</dbReference>